<comment type="function">
    <text evidence="5">FAD-dependent monooxygenase; part of the satratoxin SC1 cluster involved in the biosynthesis of satratoxins, trichothecene mycotoxins that are associated with human food poisonings (PubMed:25015739). Satratoxins are suggested to be made by products of multiple gene clusters (SC1, SC2 and SC3) that encode 21 proteins in all, including polyketide synthases, acetyltransferases, and other enzymes expected to modify the trichothecene skeleton (PubMed:25015739). SC1 encodes 10 proteins, SAT1 to SAT10 (PubMed:25015739). The largest are SAT8, which encodes a putative polyketide synthase (PKS) with a conventional non-reducing architecture, and SAT10, a putative protein containing four ankyrin repeats and thus may be involved in protein scaffolding (PubMed:25015739). The putative short-chain reductase SAT3 may assist the PKS in some capacity (PubMed:25015739). SAT6 contains a secretory lipase domain and acts probably as a trichothecene esterase (PubMed:25015739). SAT5 encodes a putative acetyltransferase, and so, with SAT6, may affect endogenous protection from toxicity (PubMed:25015739). The probable transcription factor SAT9 may regulate the expression of the SC1 cluster (PubMed:25015739). SC2 encodes proteins SAT11 to SAT16, the largest of which encodes the putative reducing PKS SAT13 (PubMed:25015739). SAT11 is a cytochrome P450 monooxygenase, while SAT14 and SAT16 are probable acetyltransferases (PubMed:25015739). The SC2 cluster may be regulated by the transcription factor SAT15 (PubMed:25015739). SC3 is a small cluster that encodes 5 proteins, SAT17 to SAT21 (PubMed:25015739). SAT21 is a putative MFS-type transporter which may have a role in exporting secondary metabolites (PubMed:25015739). The four other proteins putatively encoded in SC3 include the taurine hydroxylase-like protein SAT17, the O-methyltransferase SAT18, the acetyltransferase SAT19, and the Cys6-type zinc finger SAT20, the latter being probably involved in regulation of SC3 expression (PubMed:25015739).</text>
</comment>
<comment type="cofactor">
    <cofactor evidence="4">
        <name>FAD</name>
        <dbReference type="ChEBI" id="CHEBI:57692"/>
    </cofactor>
</comment>
<comment type="pathway">
    <text evidence="2">Mycotoxin biosynthesis.</text>
</comment>
<comment type="miscellaneous">
    <text evidence="4">Trichothecenes are sesquiterpenoid toxins that act by inhibiting protein biosynthesis.</text>
</comment>
<comment type="similarity">
    <text evidence="4">Belongs to the paxM FAD-dependent monooxygenase family.</text>
</comment>
<keyword id="KW-0274">FAD</keyword>
<keyword id="KW-0285">Flavoprotein</keyword>
<keyword id="KW-0503">Monooxygenase</keyword>
<keyword id="KW-0560">Oxidoreductase</keyword>
<gene>
    <name evidence="3" type="primary">SAT1</name>
    <name type="ORF">S7711_07275</name>
</gene>
<name>SAT1_STACB</name>
<sequence>MWASFPRPEAIPPGYVGETQHQHRSIMLLNGKSRSWIFLYERLPAPSHDRVKCIAEDVIEFADSFADWSIWNNTKLEDVVDHSTAGMSNLEEGIVKNFSHGRIVLVGDACHKFTSNAGLGLNNGIQDIVAGCNSIRKVVTESGFDLPDVKALEATFKTYYEMRLGPFNDDFIHSKMMTRMQAWANTWYFLFTRYLFFIFSEWILFRFTMLRRVCTGLVLTMHLAKSRLVALLNGFIRSGYHSFIWISAIRPCNDQLLNQLLAGAIQIEILCSLNTWRISSCRAPLLLVFDQARG</sequence>
<proteinExistence type="inferred from homology"/>
<reference key="1">
    <citation type="journal article" date="2014" name="BMC Genomics">
        <title>Comparative genome sequencing reveals chemotype-specific gene clusters in the toxigenic black mold Stachybotrys.</title>
        <authorList>
            <person name="Semeiks J."/>
            <person name="Borek D."/>
            <person name="Otwinowski Z."/>
            <person name="Grishin N.V."/>
        </authorList>
    </citation>
    <scope>NUCLEOTIDE SEQUENCE [LARGE SCALE GENOMIC DNA]</scope>
    <scope>IDENTIFICATION</scope>
    <scope>FUNCTION</scope>
    <scope>PATHWAY</scope>
    <source>
        <strain>CBS 109288 / IBT 7711</strain>
    </source>
</reference>
<protein>
    <recommendedName>
        <fullName evidence="3">FAD-dependent monooxygenase SAT1</fullName>
        <ecNumber evidence="5">1.-.-.-</ecNumber>
    </recommendedName>
    <alternativeName>
        <fullName evidence="3">Satratoxin biosynthesis SC1 cluster protein 1</fullName>
    </alternativeName>
</protein>
<organism>
    <name type="scientific">Stachybotrys chartarum (strain CBS 109288 / IBT 7711)</name>
    <name type="common">Toxic black mold</name>
    <name type="synonym">Stilbospora chartarum</name>
    <dbReference type="NCBI Taxonomy" id="1280523"/>
    <lineage>
        <taxon>Eukaryota</taxon>
        <taxon>Fungi</taxon>
        <taxon>Dikarya</taxon>
        <taxon>Ascomycota</taxon>
        <taxon>Pezizomycotina</taxon>
        <taxon>Sordariomycetes</taxon>
        <taxon>Hypocreomycetidae</taxon>
        <taxon>Hypocreales</taxon>
        <taxon>Stachybotryaceae</taxon>
        <taxon>Stachybotrys</taxon>
    </lineage>
</organism>
<accession>A0A084B9Y9</accession>
<dbReference type="EC" id="1.-.-.-" evidence="5"/>
<dbReference type="EMBL" id="KL647604">
    <property type="protein sequence ID" value="KEY74368.1"/>
    <property type="molecule type" value="Genomic_DNA"/>
</dbReference>
<dbReference type="HOGENOM" id="CLU_947228_0_0_1"/>
<dbReference type="OrthoDB" id="26968at5125"/>
<dbReference type="Proteomes" id="UP000028045">
    <property type="component" value="Unassembled WGS sequence"/>
</dbReference>
<dbReference type="GO" id="GO:0071949">
    <property type="term" value="F:FAD binding"/>
    <property type="evidence" value="ECO:0007669"/>
    <property type="project" value="InterPro"/>
</dbReference>
<dbReference type="GO" id="GO:0004497">
    <property type="term" value="F:monooxygenase activity"/>
    <property type="evidence" value="ECO:0007669"/>
    <property type="project" value="UniProtKB-KW"/>
</dbReference>
<dbReference type="Gene3D" id="3.50.50.60">
    <property type="entry name" value="FAD/NAD(P)-binding domain"/>
    <property type="match status" value="1"/>
</dbReference>
<dbReference type="InterPro" id="IPR002938">
    <property type="entry name" value="FAD-bd"/>
</dbReference>
<dbReference type="InterPro" id="IPR036188">
    <property type="entry name" value="FAD/NAD-bd_sf"/>
</dbReference>
<dbReference type="InterPro" id="IPR050562">
    <property type="entry name" value="FAD_mOase_fung"/>
</dbReference>
<dbReference type="PANTHER" id="PTHR47356:SF2">
    <property type="entry name" value="FAD-BINDING DOMAIN-CONTAINING PROTEIN-RELATED"/>
    <property type="match status" value="1"/>
</dbReference>
<dbReference type="PANTHER" id="PTHR47356">
    <property type="entry name" value="FAD-DEPENDENT MONOOXYGENASE ASQG-RELATED"/>
    <property type="match status" value="1"/>
</dbReference>
<dbReference type="Pfam" id="PF01494">
    <property type="entry name" value="FAD_binding_3"/>
    <property type="match status" value="1"/>
</dbReference>
<dbReference type="SUPFAM" id="SSF51905">
    <property type="entry name" value="FAD/NAD(P)-binding domain"/>
    <property type="match status" value="1"/>
</dbReference>
<evidence type="ECO:0000250" key="1">
    <source>
        <dbReference type="UniProtKB" id="B8M9J8"/>
    </source>
</evidence>
<evidence type="ECO:0000269" key="2">
    <source>
    </source>
</evidence>
<evidence type="ECO:0000303" key="3">
    <source>
    </source>
</evidence>
<evidence type="ECO:0000305" key="4"/>
<evidence type="ECO:0000305" key="5">
    <source>
    </source>
</evidence>
<feature type="chain" id="PRO_0000442413" description="FAD-dependent monooxygenase SAT1">
    <location>
        <begin position="1"/>
        <end position="294"/>
    </location>
</feature>
<feature type="binding site" evidence="1">
    <location>
        <position position="108"/>
    </location>
    <ligand>
        <name>FAD</name>
        <dbReference type="ChEBI" id="CHEBI:57692"/>
    </ligand>
</feature>